<organism>
    <name type="scientific">Caenorhabditis elegans</name>
    <dbReference type="NCBI Taxonomy" id="6239"/>
    <lineage>
        <taxon>Eukaryota</taxon>
        <taxon>Metazoa</taxon>
        <taxon>Ecdysozoa</taxon>
        <taxon>Nematoda</taxon>
        <taxon>Chromadorea</taxon>
        <taxon>Rhabditida</taxon>
        <taxon>Rhabditina</taxon>
        <taxon>Rhabditomorpha</taxon>
        <taxon>Rhabditoidea</taxon>
        <taxon>Rhabditidae</taxon>
        <taxon>Peloderinae</taxon>
        <taxon>Caenorhabditis</taxon>
    </lineage>
</organism>
<comment type="function">
    <text evidence="3 4 5 6">Required for contractile events in embryos that occur prior to mitosis, such as cortical ruffling and pseudocleavage. Promotes membrane ruffling by organizing cortical patches of septins and myosin II. Not generally required for cytokinesis in mitotic cells. Required for the asymmetric cleavage events that extrude the two polar bodies during oocyte meiosis. Not required for meiotic contractile ring assembly, initiation or closure but is required for the transformation of the contractile ring from a disk above the spindle to a tube around the spindle midzone. Promotes astral microtubule-directed cortical myosin polarization and cleavage furrow ingression. Regulates neuroblast cytokinesis during mid- to late-embryogenesis and is required for ventral enclosure.</text>
</comment>
<comment type="subcellular location">
    <subcellularLocation>
        <location>Cytoplasm</location>
        <location>Cell cortex</location>
    </subcellularLocation>
    <subcellularLocation>
        <location>Cytoplasm</location>
        <location>Cytoskeleton</location>
    </subcellularLocation>
    <subcellularLocation>
        <location>Cytoplasm</location>
        <location>Cytoskeleton</location>
        <location>Spindle</location>
    </subcellularLocation>
    <subcellularLocation>
        <location>Midbody</location>
    </subcellularLocation>
    <subcellularLocation>
        <location>Cleavage furrow</location>
    </subcellularLocation>
</comment>
<comment type="tissue specificity">
    <text evidence="6">Strongly expressed in dividing neuroblasts under the ventral epidermal cells during ventral enclosure.</text>
</comment>
<comment type="developmental stage">
    <text evidence="3">Enriched in embryos, where it localizes predominantly to cortical regions and the cytokinetic furrow in telophase.</text>
</comment>
<comment type="disruption phenotype">
    <text evidence="3 4 5 6">RNAi-mediated knockdown of the protein causes 100% embryonic lethality. Abnormal polar body extrusion with large and unstable polar bodies that often fuse with the oocyte. Failure of contractile ring to transform from a disk to a tube during meiosis. Ventral enclosure defects and failure of neuroblasts to complete cytokinesis. Aberrant microtubule-directed cortical myosin polarization.</text>
</comment>
<sequence length="1159" mass="126803">MGDQFDSLMERIRVRQAEMSGEGEVAKENGPVTSKITSVKQEVASPTKVFGSSSKCNDGPSTPVHFHPQEPKETTPNMKENAENSLNSFKDATVNESSSKKTSRFSMLAQEIDEYEYDYQSQYNKPKEAYMKGRSPRMSIGETRPAVLCTPAGAQAMKSPNVAVSSKSAPEIALGMSDFEARRIKFAQPIVNVNYLPNESSIFSGGSGSSVNDQSTVLGGSAEMMNVTTSSLSCGELSMNQHITHENTIINAQSCDNREAILRERQQVSNEEYGPHTFMRKKVPKEASSATSSSSSTTTLTTISGASGSTTSGISNAPQDSASTKTTTNTFTSSYLLTKTSNNNINALVSSSPKPFSKDIGRSMFSPVHFTPKSTSSPKTLSESIFSPSKSAAVEGSIATTRRLQFEEKLKKSSSANVTAPPAPTSAPVPTPRHVAPLAPTVAQQSHLTPNHRHAAQQKKHLFPVVGIVATAPIPVQTQWRGQSNTPVVQGARADEKTAGNEPPVGAGVGKLKNLKSRWEFSSATGTPIHPDATEDSLIATAIKMKESAIPKQLGHRSERKGPSASSLYSQGARSNTASPASKSTRYEQEEEDDVFEAPEFNDGGDVISEDGILQEEEEDTSKFIDNAFGFMEGSGAGTPSPYREPPLQRLEKNRPPAEVIEEETENEDESEPYEPEEEEDDDATTQFPVPERSRKSSSQLAYSVSFYRKIQRDRNEESSTVLAGPVISQISPSAPPMSSSLTSQQKLRQLTTGPANGARIVESAKDAHDRIKRAIQVEEQLVAQSKRAMILARDKPSFRGSREEFEAQWAMLRHVEKHRALLTEYDRLKRDGPRIIDGPRGTITVSQLSVNMARDYVSANIASSKKSDEVFYFAAILRYGEQVDVSKMVTSDGGLNRRGVLEFPVPLMLTGIPPDFRATVEIYGQRSMRESTSHEDKYKLKNSTFKAKTRNTFLGGGSTSSANQSLFVDPAASSSSTSSTTSNFNLLGTFSFDINCPGKHLYNMSHTVYPLEGITQMKVRKQAIDGADITYHGFLSMYQRTGEGLGSWTRYWCALENGEMKFWKQPEDEGTKGYTALMDLSTCCRSEGASVVEDICPFPNSFHIDVWAPKMDTSDPRGIERLRVMLAADTAQDLQTWLSLINSTSKQLCTWRNPIVNQ</sequence>
<feature type="chain" id="PRO_0000227969" description="Anillin-like protein 1">
    <location>
        <begin position="1"/>
        <end position="1159"/>
    </location>
</feature>
<feature type="domain" description="PH" evidence="1">
    <location>
        <begin position="1029"/>
        <end position="1147"/>
    </location>
</feature>
<feature type="region of interest" description="Disordered" evidence="2">
    <location>
        <begin position="43"/>
        <end position="81"/>
    </location>
</feature>
<feature type="region of interest" description="Disordered" evidence="2">
    <location>
        <begin position="266"/>
        <end position="327"/>
    </location>
</feature>
<feature type="region of interest" description="Disordered" evidence="2">
    <location>
        <begin position="409"/>
        <end position="430"/>
    </location>
</feature>
<feature type="region of interest" description="Disordered" evidence="2">
    <location>
        <begin position="549"/>
        <end position="608"/>
    </location>
</feature>
<feature type="region of interest" description="Disordered" evidence="2">
    <location>
        <begin position="629"/>
        <end position="699"/>
    </location>
</feature>
<feature type="compositionally biased region" description="Polar residues" evidence="2">
    <location>
        <begin position="50"/>
        <end position="60"/>
    </location>
</feature>
<feature type="compositionally biased region" description="Low complexity" evidence="2">
    <location>
        <begin position="287"/>
        <end position="327"/>
    </location>
</feature>
<feature type="compositionally biased region" description="Pro residues" evidence="2">
    <location>
        <begin position="421"/>
        <end position="430"/>
    </location>
</feature>
<feature type="compositionally biased region" description="Polar residues" evidence="2">
    <location>
        <begin position="564"/>
        <end position="584"/>
    </location>
</feature>
<feature type="compositionally biased region" description="Acidic residues" evidence="2">
    <location>
        <begin position="660"/>
        <end position="684"/>
    </location>
</feature>
<accession>Q9XTT4</accession>
<keyword id="KW-0131">Cell cycle</keyword>
<keyword id="KW-0132">Cell division</keyword>
<keyword id="KW-0963">Cytoplasm</keyword>
<keyword id="KW-0206">Cytoskeleton</keyword>
<keyword id="KW-0217">Developmental protein</keyword>
<keyword id="KW-0469">Meiosis</keyword>
<keyword id="KW-0498">Mitosis</keyword>
<keyword id="KW-1185">Reference proteome</keyword>
<gene>
    <name type="primary">ani-1</name>
    <name type="ORF">Y49E10.19</name>
</gene>
<name>ANI1_CAEEL</name>
<reference key="1">
    <citation type="journal article" date="1998" name="Science">
        <title>Genome sequence of the nematode C. elegans: a platform for investigating biology.</title>
        <authorList>
            <consortium name="The C. elegans sequencing consortium"/>
        </authorList>
    </citation>
    <scope>NUCLEOTIDE SEQUENCE [LARGE SCALE GENOMIC DNA]</scope>
    <source>
        <strain>Bristol N2</strain>
    </source>
</reference>
<reference key="2">
    <citation type="journal article" date="2005" name="Development">
        <title>Distinct roles for two C. elegans anillins in the gonad and early embryo.</title>
        <authorList>
            <person name="Maddox A.S."/>
            <person name="Habermann B."/>
            <person name="Desai A."/>
            <person name="Oegema K."/>
        </authorList>
    </citation>
    <scope>FUNCTION</scope>
    <scope>SUBCELLULAR LOCATION</scope>
    <scope>DEVELOPMENTAL STAGE</scope>
    <scope>DISRUPTION PHENOTYPE</scope>
</reference>
<reference key="3">
    <citation type="journal article" date="2010" name="Curr. Biol.">
        <title>Actomyosin tube formation in polar body cytokinesis requires Anillin in C. elegans.</title>
        <authorList>
            <person name="Dorn J.F."/>
            <person name="Zhang L."/>
            <person name="Paradis V."/>
            <person name="Edoh-Bedi D."/>
            <person name="Jusu S."/>
            <person name="Maddox P.S."/>
            <person name="Maddox A.S."/>
        </authorList>
    </citation>
    <scope>FUNCTION</scope>
    <scope>SUBCELLULAR LOCATION</scope>
    <scope>DISRUPTION PHENOTYPE</scope>
</reference>
<reference key="4">
    <citation type="journal article" date="2011" name="Mol. Biol. Cell">
        <title>Anillin promotes astral microtubule-directed cortical myosin polarization.</title>
        <authorList>
            <person name="Tse Y.C."/>
            <person name="Piekny A."/>
            <person name="Glotzer M."/>
        </authorList>
    </citation>
    <scope>FUNCTION</scope>
    <scope>SUBCELLULAR LOCATION</scope>
    <scope>DISRUPTION PHENOTYPE</scope>
</reference>
<reference key="5">
    <citation type="journal article" date="2013" name="Dev. Biol.">
        <title>Caenorhabditis elegans anillin (ani-1) regulates neuroblast cytokinesis and epidermal morphogenesis during embryonic development.</title>
        <authorList>
            <person name="Fotopoulos N."/>
            <person name="Wernike D."/>
            <person name="Chen Y."/>
            <person name="Makil N."/>
            <person name="Marte A."/>
            <person name="Piekny A."/>
        </authorList>
    </citation>
    <scope>FUNCTION</scope>
    <scope>SUBCELLULAR LOCATION</scope>
    <scope>TISSUE SPECIFICITY</scope>
    <scope>DISRUPTION PHENOTYPE</scope>
</reference>
<dbReference type="EMBL" id="Z98866">
    <property type="protein sequence ID" value="CAB11565.2"/>
    <property type="molecule type" value="Genomic_DNA"/>
</dbReference>
<dbReference type="PIR" id="T27053">
    <property type="entry name" value="T27053"/>
</dbReference>
<dbReference type="RefSeq" id="NP_499624.2">
    <property type="nucleotide sequence ID" value="NM_067223.9"/>
</dbReference>
<dbReference type="SMR" id="Q9XTT4"/>
<dbReference type="BioGRID" id="41851">
    <property type="interactions" value="31"/>
</dbReference>
<dbReference type="FunCoup" id="Q9XTT4">
    <property type="interactions" value="186"/>
</dbReference>
<dbReference type="STRING" id="6239.Y49E10.19.1"/>
<dbReference type="iPTMnet" id="Q9XTT4"/>
<dbReference type="PaxDb" id="6239-Y49E10.19"/>
<dbReference type="PeptideAtlas" id="Q9XTT4"/>
<dbReference type="EnsemblMetazoa" id="Y49E10.19.1">
    <property type="protein sequence ID" value="Y49E10.19.1"/>
    <property type="gene ID" value="WBGene00013038"/>
</dbReference>
<dbReference type="EnsemblMetazoa" id="Y49E10.19.2">
    <property type="protein sequence ID" value="Y49E10.19.2"/>
    <property type="gene ID" value="WBGene00013038"/>
</dbReference>
<dbReference type="GeneID" id="176672"/>
<dbReference type="KEGG" id="cel:CELE_Y49E10.19"/>
<dbReference type="UCSC" id="Y49E10.19">
    <property type="organism name" value="c. elegans"/>
</dbReference>
<dbReference type="AGR" id="WB:WBGene00013038"/>
<dbReference type="CTD" id="176672"/>
<dbReference type="WormBase" id="Y49E10.19">
    <property type="protein sequence ID" value="CE33878"/>
    <property type="gene ID" value="WBGene00013038"/>
    <property type="gene designation" value="ani-1"/>
</dbReference>
<dbReference type="eggNOG" id="KOG3640">
    <property type="taxonomic scope" value="Eukaryota"/>
</dbReference>
<dbReference type="HOGENOM" id="CLU_277216_0_0_1"/>
<dbReference type="InParanoid" id="Q9XTT4"/>
<dbReference type="OMA" id="ELSMNQH"/>
<dbReference type="OrthoDB" id="5915976at2759"/>
<dbReference type="PRO" id="PR:Q9XTT4"/>
<dbReference type="Proteomes" id="UP000001940">
    <property type="component" value="Chromosome III"/>
</dbReference>
<dbReference type="Bgee" id="WBGene00013038">
    <property type="expression patterns" value="Expressed in embryo and 4 other cell types or tissues"/>
</dbReference>
<dbReference type="GO" id="GO:0005826">
    <property type="term" value="C:actomyosin contractile ring"/>
    <property type="evidence" value="ECO:0000318"/>
    <property type="project" value="GO_Central"/>
</dbReference>
<dbReference type="GO" id="GO:0005938">
    <property type="term" value="C:cell cortex"/>
    <property type="evidence" value="ECO:0000314"/>
    <property type="project" value="WormBase"/>
</dbReference>
<dbReference type="GO" id="GO:0031252">
    <property type="term" value="C:cell leading edge"/>
    <property type="evidence" value="ECO:0000314"/>
    <property type="project" value="WormBase"/>
</dbReference>
<dbReference type="GO" id="GO:0032154">
    <property type="term" value="C:cleavage furrow"/>
    <property type="evidence" value="ECO:0000314"/>
    <property type="project" value="WormBase"/>
</dbReference>
<dbReference type="GO" id="GO:0005737">
    <property type="term" value="C:cytoplasm"/>
    <property type="evidence" value="ECO:0000314"/>
    <property type="project" value="WormBase"/>
</dbReference>
<dbReference type="GO" id="GO:0030426">
    <property type="term" value="C:growth cone"/>
    <property type="evidence" value="ECO:0000314"/>
    <property type="project" value="WormBase"/>
</dbReference>
<dbReference type="GO" id="GO:0005874">
    <property type="term" value="C:microtubule"/>
    <property type="evidence" value="ECO:0000314"/>
    <property type="project" value="WormBase"/>
</dbReference>
<dbReference type="GO" id="GO:0030496">
    <property type="term" value="C:midbody"/>
    <property type="evidence" value="ECO:0000314"/>
    <property type="project" value="WormBase"/>
</dbReference>
<dbReference type="GO" id="GO:0005634">
    <property type="term" value="C:nucleus"/>
    <property type="evidence" value="ECO:0000314"/>
    <property type="project" value="WormBase"/>
</dbReference>
<dbReference type="GO" id="GO:0005819">
    <property type="term" value="C:spindle"/>
    <property type="evidence" value="ECO:0007669"/>
    <property type="project" value="UniProtKB-SubCell"/>
</dbReference>
<dbReference type="GO" id="GO:0051015">
    <property type="term" value="F:actin filament binding"/>
    <property type="evidence" value="ECO:0000314"/>
    <property type="project" value="WormBase"/>
</dbReference>
<dbReference type="GO" id="GO:0008017">
    <property type="term" value="F:microtubule binding"/>
    <property type="evidence" value="ECO:0000314"/>
    <property type="project" value="WormBase"/>
</dbReference>
<dbReference type="GO" id="GO:0031267">
    <property type="term" value="F:small GTPase binding"/>
    <property type="evidence" value="ECO:0000353"/>
    <property type="project" value="WormBase"/>
</dbReference>
<dbReference type="GO" id="GO:0051017">
    <property type="term" value="P:actin filament bundle assembly"/>
    <property type="evidence" value="ECO:0000314"/>
    <property type="project" value="WormBase"/>
</dbReference>
<dbReference type="GO" id="GO:0000915">
    <property type="term" value="P:actomyosin contractile ring assembly"/>
    <property type="evidence" value="ECO:0000318"/>
    <property type="project" value="GO_Central"/>
</dbReference>
<dbReference type="GO" id="GO:0040002">
    <property type="term" value="P:collagen and cuticulin-based cuticle development"/>
    <property type="evidence" value="ECO:0000315"/>
    <property type="project" value="WormBase"/>
</dbReference>
<dbReference type="GO" id="GO:0030865">
    <property type="term" value="P:cortical cytoskeleton organization"/>
    <property type="evidence" value="ECO:0000315"/>
    <property type="project" value="WormBase"/>
</dbReference>
<dbReference type="GO" id="GO:0009792">
    <property type="term" value="P:embryo development ending in birth or egg hatching"/>
    <property type="evidence" value="ECO:0000315"/>
    <property type="project" value="WormBase"/>
</dbReference>
<dbReference type="GO" id="GO:0030590">
    <property type="term" value="P:first cell cycle pseudocleavage"/>
    <property type="evidence" value="ECO:0000315"/>
    <property type="project" value="WormBase"/>
</dbReference>
<dbReference type="GO" id="GO:0040011">
    <property type="term" value="P:locomotion"/>
    <property type="evidence" value="ECO:0000315"/>
    <property type="project" value="WormBase"/>
</dbReference>
<dbReference type="GO" id="GO:0000281">
    <property type="term" value="P:mitotic cytokinesis"/>
    <property type="evidence" value="ECO:0000318"/>
    <property type="project" value="GO_Central"/>
</dbReference>
<dbReference type="GO" id="GO:0045138">
    <property type="term" value="P:nematode male tail tip morphogenesis"/>
    <property type="evidence" value="ECO:0000315"/>
    <property type="project" value="WormBase"/>
</dbReference>
<dbReference type="GO" id="GO:0040038">
    <property type="term" value="P:polar body extrusion after meiotic divisions"/>
    <property type="evidence" value="ECO:0000315"/>
    <property type="project" value="WormBase"/>
</dbReference>
<dbReference type="GO" id="GO:0008104">
    <property type="term" value="P:protein localization"/>
    <property type="evidence" value="ECO:0000315"/>
    <property type="project" value="WormBase"/>
</dbReference>
<dbReference type="GO" id="GO:0031106">
    <property type="term" value="P:septin ring organization"/>
    <property type="evidence" value="ECO:0000315"/>
    <property type="project" value="WormBase"/>
</dbReference>
<dbReference type="CDD" id="cd01263">
    <property type="entry name" value="PH_anillin"/>
    <property type="match status" value="1"/>
</dbReference>
<dbReference type="Gene3D" id="2.30.29.30">
    <property type="entry name" value="Pleckstrin-homology domain (PH domain)/Phosphotyrosine-binding domain (PTB)"/>
    <property type="match status" value="1"/>
</dbReference>
<dbReference type="InterPro" id="IPR012966">
    <property type="entry name" value="AHD"/>
</dbReference>
<dbReference type="InterPro" id="IPR051364">
    <property type="entry name" value="Cytokinesis/Rho-signaling"/>
</dbReference>
<dbReference type="InterPro" id="IPR011993">
    <property type="entry name" value="PH-like_dom_sf"/>
</dbReference>
<dbReference type="InterPro" id="IPR037840">
    <property type="entry name" value="PH_Anillin"/>
</dbReference>
<dbReference type="InterPro" id="IPR001849">
    <property type="entry name" value="PH_domain"/>
</dbReference>
<dbReference type="PANTHER" id="PTHR21538:SF11">
    <property type="entry name" value="ANILLIN-LIKE PROTEIN 1"/>
    <property type="match status" value="1"/>
</dbReference>
<dbReference type="PANTHER" id="PTHR21538">
    <property type="entry name" value="ANILLIN/RHOTEKIN RTKN"/>
    <property type="match status" value="1"/>
</dbReference>
<dbReference type="Pfam" id="PF08174">
    <property type="entry name" value="Anillin"/>
    <property type="match status" value="1"/>
</dbReference>
<dbReference type="Pfam" id="PF00169">
    <property type="entry name" value="PH"/>
    <property type="match status" value="1"/>
</dbReference>
<dbReference type="SMART" id="SM00233">
    <property type="entry name" value="PH"/>
    <property type="match status" value="1"/>
</dbReference>
<dbReference type="SUPFAM" id="SSF50729">
    <property type="entry name" value="PH domain-like"/>
    <property type="match status" value="1"/>
</dbReference>
<dbReference type="PROSITE" id="PS50003">
    <property type="entry name" value="PH_DOMAIN"/>
    <property type="match status" value="1"/>
</dbReference>
<protein>
    <recommendedName>
        <fullName>Anillin-like protein 1</fullName>
    </recommendedName>
</protein>
<proteinExistence type="evidence at transcript level"/>
<evidence type="ECO:0000255" key="1">
    <source>
        <dbReference type="PROSITE-ProRule" id="PRU00145"/>
    </source>
</evidence>
<evidence type="ECO:0000256" key="2">
    <source>
        <dbReference type="SAM" id="MobiDB-lite"/>
    </source>
</evidence>
<evidence type="ECO:0000269" key="3">
    <source>
    </source>
</evidence>
<evidence type="ECO:0000269" key="4">
    <source>
    </source>
</evidence>
<evidence type="ECO:0000269" key="5">
    <source>
    </source>
</evidence>
<evidence type="ECO:0000269" key="6">
    <source>
    </source>
</evidence>